<sequence>MGMMSEFKTFAMRGNVIDLAVGVIIGAAFGKIVDSVVNDLIMPVIGRIVGKLDFSNMFVMLADPPPGTPQTLDALKKAGVPVFAYGNFLTIVVNFVILAFIIFMMVRAFNKMREKEAEPAAPAVTPEDIVLLREIRDSLKAPRS</sequence>
<dbReference type="EMBL" id="CP000352">
    <property type="protein sequence ID" value="ABF10103.1"/>
    <property type="molecule type" value="Genomic_DNA"/>
</dbReference>
<dbReference type="RefSeq" id="WP_011517713.1">
    <property type="nucleotide sequence ID" value="NC_007973.1"/>
</dbReference>
<dbReference type="SMR" id="Q1LIC3"/>
<dbReference type="STRING" id="266264.Rmet_3231"/>
<dbReference type="KEGG" id="rme:Rmet_3231"/>
<dbReference type="eggNOG" id="COG1970">
    <property type="taxonomic scope" value="Bacteria"/>
</dbReference>
<dbReference type="HOGENOM" id="CLU_095787_0_1_4"/>
<dbReference type="Proteomes" id="UP000002429">
    <property type="component" value="Chromosome"/>
</dbReference>
<dbReference type="GO" id="GO:0005886">
    <property type="term" value="C:plasma membrane"/>
    <property type="evidence" value="ECO:0007669"/>
    <property type="project" value="UniProtKB-SubCell"/>
</dbReference>
<dbReference type="GO" id="GO:0008381">
    <property type="term" value="F:mechanosensitive monoatomic ion channel activity"/>
    <property type="evidence" value="ECO:0007669"/>
    <property type="project" value="UniProtKB-UniRule"/>
</dbReference>
<dbReference type="Gene3D" id="1.10.1200.120">
    <property type="entry name" value="Large-conductance mechanosensitive channel, MscL, domain 1"/>
    <property type="match status" value="1"/>
</dbReference>
<dbReference type="HAMAP" id="MF_00115">
    <property type="entry name" value="MscL"/>
    <property type="match status" value="1"/>
</dbReference>
<dbReference type="InterPro" id="IPR019823">
    <property type="entry name" value="Mechanosensitive_channel_CS"/>
</dbReference>
<dbReference type="InterPro" id="IPR001185">
    <property type="entry name" value="MS_channel"/>
</dbReference>
<dbReference type="InterPro" id="IPR037673">
    <property type="entry name" value="MSC/AndL"/>
</dbReference>
<dbReference type="InterPro" id="IPR036019">
    <property type="entry name" value="MscL_channel"/>
</dbReference>
<dbReference type="NCBIfam" id="TIGR00220">
    <property type="entry name" value="mscL"/>
    <property type="match status" value="1"/>
</dbReference>
<dbReference type="NCBIfam" id="NF001843">
    <property type="entry name" value="PRK00567.1-4"/>
    <property type="match status" value="1"/>
</dbReference>
<dbReference type="NCBIfam" id="NF010557">
    <property type="entry name" value="PRK13952.1"/>
    <property type="match status" value="1"/>
</dbReference>
<dbReference type="PANTHER" id="PTHR30266:SF2">
    <property type="entry name" value="LARGE-CONDUCTANCE MECHANOSENSITIVE CHANNEL"/>
    <property type="match status" value="1"/>
</dbReference>
<dbReference type="PANTHER" id="PTHR30266">
    <property type="entry name" value="MECHANOSENSITIVE CHANNEL MSCL"/>
    <property type="match status" value="1"/>
</dbReference>
<dbReference type="Pfam" id="PF01741">
    <property type="entry name" value="MscL"/>
    <property type="match status" value="1"/>
</dbReference>
<dbReference type="PRINTS" id="PR01264">
    <property type="entry name" value="MECHCHANNEL"/>
</dbReference>
<dbReference type="SUPFAM" id="SSF81330">
    <property type="entry name" value="Gated mechanosensitive channel"/>
    <property type="match status" value="1"/>
</dbReference>
<dbReference type="PROSITE" id="PS01327">
    <property type="entry name" value="MSCL"/>
    <property type="match status" value="1"/>
</dbReference>
<keyword id="KW-0997">Cell inner membrane</keyword>
<keyword id="KW-1003">Cell membrane</keyword>
<keyword id="KW-0407">Ion channel</keyword>
<keyword id="KW-0406">Ion transport</keyword>
<keyword id="KW-0472">Membrane</keyword>
<keyword id="KW-1185">Reference proteome</keyword>
<keyword id="KW-0812">Transmembrane</keyword>
<keyword id="KW-1133">Transmembrane helix</keyword>
<keyword id="KW-0813">Transport</keyword>
<evidence type="ECO:0000255" key="1">
    <source>
        <dbReference type="HAMAP-Rule" id="MF_00115"/>
    </source>
</evidence>
<comment type="function">
    <text evidence="1">Channel that opens in response to stretch forces in the membrane lipid bilayer. May participate in the regulation of osmotic pressure changes within the cell.</text>
</comment>
<comment type="subunit">
    <text evidence="1">Homopentamer.</text>
</comment>
<comment type="subcellular location">
    <subcellularLocation>
        <location evidence="1">Cell inner membrane</location>
        <topology evidence="1">Multi-pass membrane protein</topology>
    </subcellularLocation>
</comment>
<comment type="similarity">
    <text evidence="1">Belongs to the MscL family.</text>
</comment>
<reference key="1">
    <citation type="journal article" date="2010" name="PLoS ONE">
        <title>The complete genome sequence of Cupriavidus metallidurans strain CH34, a master survivalist in harsh and anthropogenic environments.</title>
        <authorList>
            <person name="Janssen P.J."/>
            <person name="Van Houdt R."/>
            <person name="Moors H."/>
            <person name="Monsieurs P."/>
            <person name="Morin N."/>
            <person name="Michaux A."/>
            <person name="Benotmane M.A."/>
            <person name="Leys N."/>
            <person name="Vallaeys T."/>
            <person name="Lapidus A."/>
            <person name="Monchy S."/>
            <person name="Medigue C."/>
            <person name="Taghavi S."/>
            <person name="McCorkle S."/>
            <person name="Dunn J."/>
            <person name="van der Lelie D."/>
            <person name="Mergeay M."/>
        </authorList>
    </citation>
    <scope>NUCLEOTIDE SEQUENCE [LARGE SCALE GENOMIC DNA]</scope>
    <source>
        <strain>ATCC 43123 / DSM 2839 / NBRC 102507 / CH34</strain>
    </source>
</reference>
<proteinExistence type="inferred from homology"/>
<feature type="chain" id="PRO_1000015413" description="Large-conductance mechanosensitive channel">
    <location>
        <begin position="1"/>
        <end position="144"/>
    </location>
</feature>
<feature type="transmembrane region" description="Helical" evidence="1">
    <location>
        <begin position="16"/>
        <end position="36"/>
    </location>
</feature>
<feature type="transmembrane region" description="Helical" evidence="1">
    <location>
        <begin position="86"/>
        <end position="106"/>
    </location>
</feature>
<organism>
    <name type="scientific">Cupriavidus metallidurans (strain ATCC 43123 / DSM 2839 / NBRC 102507 / CH34)</name>
    <name type="common">Ralstonia metallidurans</name>
    <dbReference type="NCBI Taxonomy" id="266264"/>
    <lineage>
        <taxon>Bacteria</taxon>
        <taxon>Pseudomonadati</taxon>
        <taxon>Pseudomonadota</taxon>
        <taxon>Betaproteobacteria</taxon>
        <taxon>Burkholderiales</taxon>
        <taxon>Burkholderiaceae</taxon>
        <taxon>Cupriavidus</taxon>
    </lineage>
</organism>
<protein>
    <recommendedName>
        <fullName evidence="1">Large-conductance mechanosensitive channel</fullName>
    </recommendedName>
</protein>
<gene>
    <name evidence="1" type="primary">mscL</name>
    <name type="ordered locus">Rmet_3231</name>
</gene>
<accession>Q1LIC3</accession>
<name>MSCL_CUPMC</name>